<proteinExistence type="inferred from homology"/>
<gene>
    <name evidence="1" type="primary">rpmC</name>
    <name type="ordered locus">Sala_2810</name>
</gene>
<name>RL29_SPHAL</name>
<accession>Q1GPA7</accession>
<feature type="chain" id="PRO_1000007614" description="Large ribosomal subunit protein uL29">
    <location>
        <begin position="1"/>
        <end position="67"/>
    </location>
</feature>
<reference key="1">
    <citation type="journal article" date="2009" name="Proc. Natl. Acad. Sci. U.S.A.">
        <title>The genomic basis of trophic strategy in marine bacteria.</title>
        <authorList>
            <person name="Lauro F.M."/>
            <person name="McDougald D."/>
            <person name="Thomas T."/>
            <person name="Williams T.J."/>
            <person name="Egan S."/>
            <person name="Rice S."/>
            <person name="DeMaere M.Z."/>
            <person name="Ting L."/>
            <person name="Ertan H."/>
            <person name="Johnson J."/>
            <person name="Ferriera S."/>
            <person name="Lapidus A."/>
            <person name="Anderson I."/>
            <person name="Kyrpides N."/>
            <person name="Munk A.C."/>
            <person name="Detter C."/>
            <person name="Han C.S."/>
            <person name="Brown M.V."/>
            <person name="Robb F.T."/>
            <person name="Kjelleberg S."/>
            <person name="Cavicchioli R."/>
        </authorList>
    </citation>
    <scope>NUCLEOTIDE SEQUENCE [LARGE SCALE GENOMIC DNA]</scope>
    <source>
        <strain>DSM 13593 / LMG 18877 / RB2256</strain>
    </source>
</reference>
<organism>
    <name type="scientific">Sphingopyxis alaskensis (strain DSM 13593 / LMG 18877 / RB2256)</name>
    <name type="common">Sphingomonas alaskensis</name>
    <dbReference type="NCBI Taxonomy" id="317655"/>
    <lineage>
        <taxon>Bacteria</taxon>
        <taxon>Pseudomonadati</taxon>
        <taxon>Pseudomonadota</taxon>
        <taxon>Alphaproteobacteria</taxon>
        <taxon>Sphingomonadales</taxon>
        <taxon>Sphingomonadaceae</taxon>
        <taxon>Sphingopyxis</taxon>
    </lineage>
</organism>
<evidence type="ECO:0000255" key="1">
    <source>
        <dbReference type="HAMAP-Rule" id="MF_00374"/>
    </source>
</evidence>
<evidence type="ECO:0000305" key="2"/>
<comment type="similarity">
    <text evidence="1">Belongs to the universal ribosomal protein uL29 family.</text>
</comment>
<keyword id="KW-1185">Reference proteome</keyword>
<keyword id="KW-0687">Ribonucleoprotein</keyword>
<keyword id="KW-0689">Ribosomal protein</keyword>
<protein>
    <recommendedName>
        <fullName evidence="1">Large ribosomal subunit protein uL29</fullName>
    </recommendedName>
    <alternativeName>
        <fullName evidence="2">50S ribosomal protein L29</fullName>
    </alternativeName>
</protein>
<dbReference type="EMBL" id="CP000356">
    <property type="protein sequence ID" value="ABF54515.1"/>
    <property type="molecule type" value="Genomic_DNA"/>
</dbReference>
<dbReference type="RefSeq" id="WP_011543080.1">
    <property type="nucleotide sequence ID" value="NC_008048.1"/>
</dbReference>
<dbReference type="SMR" id="Q1GPA7"/>
<dbReference type="STRING" id="317655.Sala_2810"/>
<dbReference type="KEGG" id="sal:Sala_2810"/>
<dbReference type="eggNOG" id="COG0255">
    <property type="taxonomic scope" value="Bacteria"/>
</dbReference>
<dbReference type="HOGENOM" id="CLU_158491_1_0_5"/>
<dbReference type="OrthoDB" id="9815192at2"/>
<dbReference type="Proteomes" id="UP000006578">
    <property type="component" value="Chromosome"/>
</dbReference>
<dbReference type="GO" id="GO:0022625">
    <property type="term" value="C:cytosolic large ribosomal subunit"/>
    <property type="evidence" value="ECO:0007669"/>
    <property type="project" value="TreeGrafter"/>
</dbReference>
<dbReference type="GO" id="GO:0003735">
    <property type="term" value="F:structural constituent of ribosome"/>
    <property type="evidence" value="ECO:0007669"/>
    <property type="project" value="InterPro"/>
</dbReference>
<dbReference type="GO" id="GO:0006412">
    <property type="term" value="P:translation"/>
    <property type="evidence" value="ECO:0007669"/>
    <property type="project" value="UniProtKB-UniRule"/>
</dbReference>
<dbReference type="CDD" id="cd00427">
    <property type="entry name" value="Ribosomal_L29_HIP"/>
    <property type="match status" value="1"/>
</dbReference>
<dbReference type="FunFam" id="1.10.287.310:FF:000001">
    <property type="entry name" value="50S ribosomal protein L29"/>
    <property type="match status" value="1"/>
</dbReference>
<dbReference type="Gene3D" id="1.10.287.310">
    <property type="match status" value="1"/>
</dbReference>
<dbReference type="HAMAP" id="MF_00374">
    <property type="entry name" value="Ribosomal_uL29"/>
    <property type="match status" value="1"/>
</dbReference>
<dbReference type="InterPro" id="IPR050063">
    <property type="entry name" value="Ribosomal_protein_uL29"/>
</dbReference>
<dbReference type="InterPro" id="IPR001854">
    <property type="entry name" value="Ribosomal_uL29"/>
</dbReference>
<dbReference type="InterPro" id="IPR036049">
    <property type="entry name" value="Ribosomal_uL29_sf"/>
</dbReference>
<dbReference type="NCBIfam" id="TIGR00012">
    <property type="entry name" value="L29"/>
    <property type="match status" value="1"/>
</dbReference>
<dbReference type="PANTHER" id="PTHR10916">
    <property type="entry name" value="60S RIBOSOMAL PROTEIN L35/50S RIBOSOMAL PROTEIN L29"/>
    <property type="match status" value="1"/>
</dbReference>
<dbReference type="PANTHER" id="PTHR10916:SF0">
    <property type="entry name" value="LARGE RIBOSOMAL SUBUNIT PROTEIN UL29C"/>
    <property type="match status" value="1"/>
</dbReference>
<dbReference type="Pfam" id="PF00831">
    <property type="entry name" value="Ribosomal_L29"/>
    <property type="match status" value="1"/>
</dbReference>
<dbReference type="SUPFAM" id="SSF46561">
    <property type="entry name" value="Ribosomal protein L29 (L29p)"/>
    <property type="match status" value="1"/>
</dbReference>
<sequence length="67" mass="7608">MAKTDDFKAKTDDQLAEQLGELKREAFNLRFQAATGQLEKASRVKEVRRSIARIKTVQTERARSAAK</sequence>